<gene>
    <name type="primary">espC</name>
    <name evidence="11" type="synonym">snm9</name>
    <name type="ordered locus">Rv3615c</name>
    <name type="ORF">MTCY07H7B.07</name>
</gene>
<reference key="1">
    <citation type="journal article" date="1998" name="Nature">
        <title>Deciphering the biology of Mycobacterium tuberculosis from the complete genome sequence.</title>
        <authorList>
            <person name="Cole S.T."/>
            <person name="Brosch R."/>
            <person name="Parkhill J."/>
            <person name="Garnier T."/>
            <person name="Churcher C.M."/>
            <person name="Harris D.E."/>
            <person name="Gordon S.V."/>
            <person name="Eiglmeier K."/>
            <person name="Gas S."/>
            <person name="Barry C.E. III"/>
            <person name="Tekaia F."/>
            <person name="Badcock K."/>
            <person name="Basham D."/>
            <person name="Brown D."/>
            <person name="Chillingworth T."/>
            <person name="Connor R."/>
            <person name="Davies R.M."/>
            <person name="Devlin K."/>
            <person name="Feltwell T."/>
            <person name="Gentles S."/>
            <person name="Hamlin N."/>
            <person name="Holroyd S."/>
            <person name="Hornsby T."/>
            <person name="Jagels K."/>
            <person name="Krogh A."/>
            <person name="McLean J."/>
            <person name="Moule S."/>
            <person name="Murphy L.D."/>
            <person name="Oliver S."/>
            <person name="Osborne J."/>
            <person name="Quail M.A."/>
            <person name="Rajandream M.A."/>
            <person name="Rogers J."/>
            <person name="Rutter S."/>
            <person name="Seeger K."/>
            <person name="Skelton S."/>
            <person name="Squares S."/>
            <person name="Squares R."/>
            <person name="Sulston J.E."/>
            <person name="Taylor K."/>
            <person name="Whitehead S."/>
            <person name="Barrell B.G."/>
        </authorList>
    </citation>
    <scope>NUCLEOTIDE SEQUENCE [LARGE SCALE GENOMIC DNA]</scope>
    <source>
        <strain>ATCC 25618 / H37Rv</strain>
    </source>
</reference>
<reference key="2">
    <citation type="journal article" date="2005" name="Mol. Microbiol.">
        <title>A non-RD1 gene cluster is required for Snm secretion in Mycobacterium tuberculosis.</title>
        <authorList>
            <person name="MacGurn J.A."/>
            <person name="Raghavan S."/>
            <person name="Stanley S.A."/>
            <person name="Cox J.S."/>
        </authorList>
    </citation>
    <scope>FUNCTION</scope>
    <scope>DISRUPTION PHENOTYPE</scope>
    <source>
        <strain>ATCC 35801 / TMC 107 / Erdman</strain>
    </source>
</reference>
<reference key="3">
    <citation type="journal article" date="2006" name="Mol. Microbiol.">
        <title>The Mycobacterium tuberculosis PhoPR two-component system regulates genes essential for virulence and complex lipid biosynthesis.</title>
        <authorList>
            <person name="Walters S.B."/>
            <person name="Dubnau E."/>
            <person name="Kolesnikova I."/>
            <person name="Laval F."/>
            <person name="Daffe M."/>
            <person name="Smith I."/>
        </authorList>
    </citation>
    <scope>REGULATION BY PHOP/PHOR</scope>
    <source>
        <strain>H37Rv</strain>
    </source>
</reference>
<reference key="4">
    <citation type="journal article" date="2008" name="Nature">
        <title>Secreted transcription factor controls Mycobacterium tuberculosis virulence.</title>
        <authorList>
            <person name="Raghavan S."/>
            <person name="Manzanillo P."/>
            <person name="Chan K."/>
            <person name="Dovey C."/>
            <person name="Cox J.S."/>
        </authorList>
    </citation>
    <scope>REGULATION BY ESPR</scope>
</reference>
<reference key="5">
    <citation type="journal article" date="2009" name="Mol. Microbiol.">
        <title>ESX-1 secreted virulence factors are recognized by multiple cytosolic AAA ATPases in pathogenic mycobacteria.</title>
        <authorList>
            <person name="DiGiuseppe Champion P.A."/>
            <person name="Champion M.M."/>
            <person name="Manzanillo P."/>
            <person name="Cox J.S."/>
        </authorList>
    </citation>
    <scope>FUNCTION</scope>
    <scope>INTERACTION WITH ECCA1 AND ESPF</scope>
    <scope>SUBCELLULAR LOCATION</scope>
    <scope>DOMAIN</scope>
</reference>
<reference key="6">
    <citation type="journal article" date="2011" name="Mol. Cell. Proteomics">
        <title>Proteogenomic analysis of Mycobacterium tuberculosis by high resolution mass spectrometry.</title>
        <authorList>
            <person name="Kelkar D.S."/>
            <person name="Kumar D."/>
            <person name="Kumar P."/>
            <person name="Balakrishnan L."/>
            <person name="Muthusamy B."/>
            <person name="Yadav A.K."/>
            <person name="Shrivastava P."/>
            <person name="Marimuthu A."/>
            <person name="Anand S."/>
            <person name="Sundaram H."/>
            <person name="Kingsbury R."/>
            <person name="Harsha H.C."/>
            <person name="Nair B."/>
            <person name="Prasad T.S."/>
            <person name="Chauhan D.S."/>
            <person name="Katoch K."/>
            <person name="Katoch V.M."/>
            <person name="Kumar P."/>
            <person name="Chaerkady R."/>
            <person name="Ramachandran S."/>
            <person name="Dash D."/>
            <person name="Pandey A."/>
        </authorList>
    </citation>
    <scope>ACETYLATION [LARGE SCALE ANALYSIS] AT THR-2</scope>
    <scope>CLEAVAGE OF INITIATOR METHIONINE [LARGE SCALE ANALYSIS]</scope>
    <scope>IDENTIFICATION BY MASS SPECTROMETRY [LARGE SCALE ANALYSIS]</scope>
    <source>
        <strain>ATCC 25618 / H37Rv</strain>
    </source>
</reference>
<reference key="7">
    <citation type="journal article" date="2011" name="Proc. Natl. Acad. Sci. U.S.A.">
        <title>Rv3615c is a highly immunodominant RD1 (Region of Difference 1)-dependent secreted antigen specific for Mycobacterium tuberculosis infection.</title>
        <authorList>
            <person name="Millington K.A."/>
            <person name="Fortune S.M."/>
            <person name="Low J."/>
            <person name="Garces A."/>
            <person name="Hingley-Wilson S.M."/>
            <person name="Wickremasinghe M."/>
            <person name="Kon O.M."/>
            <person name="Lalvani A."/>
        </authorList>
    </citation>
    <scope>SUBCELLULAR LOCATION</scope>
    <scope>BIOTECHNOLOGY</scope>
</reference>
<reference key="8">
    <citation type="journal article" date="2012" name="J. Bacteriol.">
        <title>Long-range transcriptional control of an operon necessary for virulence-critical ESX-1 secretion in Mycobacterium tuberculosis.</title>
        <authorList>
            <person name="Hunt D.M."/>
            <person name="Sweeney N.P."/>
            <person name="Mori L."/>
            <person name="Whalan R.H."/>
            <person name="Comas I."/>
            <person name="Norman L."/>
            <person name="Cortes T."/>
            <person name="Arnvig K.B."/>
            <person name="Davis E.O."/>
            <person name="Stapleton M.R."/>
            <person name="Green J."/>
            <person name="Buxton R.S."/>
        </authorList>
    </citation>
    <scope>REGULATION BY ESPR</scope>
    <source>
        <strain>ATCC 25618 / H37Rv</strain>
    </source>
</reference>
<reference key="9">
    <citation type="journal article" date="2013" name="J. Bacteriol.">
        <title>MprAB regulates the espA operon in Mycobacterium tuberculosis and modulates ESX-1 function and host cytokine response.</title>
        <authorList>
            <person name="Pang X."/>
            <person name="Samten B."/>
            <person name="Cao G."/>
            <person name="Wang X."/>
            <person name="Tvinnereim A.R."/>
            <person name="Chen X.L."/>
            <person name="Howard S.T."/>
        </authorList>
    </citation>
    <scope>REGULATION BY MPRA/MPRB</scope>
    <source>
        <strain>H37Rv</strain>
    </source>
</reference>
<reference key="10">
    <citation type="journal article" date="2014" name="Hum. Vaccin. Immunother.">
        <title>A novel vaccine p846 encoding Rv3615c, Mtb10.4, and Rv2660c elicits robust immune response and alleviates lung injury induced by Mycobacterium infection.</title>
        <authorList>
            <person name="Kong H."/>
            <person name="Dong C."/>
            <person name="Xiong S."/>
        </authorList>
    </citation>
    <scope>BIOTECHNOLOGY</scope>
</reference>
<reference key="11">
    <citation type="journal article" date="2015" name="Microbiology">
        <title>EspR, a regulator of the ESX-1 secretion system in Mycobacterium tuberculosis, is directly regulated by the two-component systems MprAB and PhoPR.</title>
        <authorList>
            <person name="Cao G."/>
            <person name="Howard S.T."/>
            <person name="Zhang P."/>
            <person name="Wang X."/>
            <person name="Chen X.L."/>
            <person name="Samten B."/>
            <person name="Pang X."/>
        </authorList>
    </citation>
    <scope>TRANSCRIPTIONAL REGULATION</scope>
    <source>
        <strain>ATCC 35801 / TMC 107 / Erdman</strain>
    </source>
</reference>
<reference key="12">
    <citation type="journal article" date="2015" name="Cell Host Microbe">
        <title>Mycobacterium tuberculosis differentially activates cGAS- and inflammasome-dependent intracellular immune responses through ESX-1.</title>
        <authorList>
            <person name="Wassermann R."/>
            <person name="Gulen M.F."/>
            <person name="Sala C."/>
            <person name="Perin S.G."/>
            <person name="Lou Y."/>
            <person name="Rybniker J."/>
            <person name="Schmid-Burgk J.L."/>
            <person name="Schmidt T."/>
            <person name="Hornung V."/>
            <person name="Cole S.T."/>
            <person name="Ablasser A."/>
        </authorList>
    </citation>
    <scope>FUNCTION</scope>
    <scope>DISRUPTION PHENOTYPE</scope>
    <source>
        <strain>ATCC 35801 / TMC 107 / Erdman</strain>
    </source>
</reference>
<comment type="function">
    <text evidence="1 4">Required for ESX-1 function. Required for either stability or expression of EspA.</text>
</comment>
<comment type="subunit">
    <text evidence="4">Interacts with EccA1 and EspF.</text>
</comment>
<comment type="subcellular location">
    <subcellularLocation>
        <location evidence="4 5">Secreted</location>
    </subcellularLocation>
    <text evidence="4 5">Secreted via the ESX-1 / type VII secretion system (T7SS).</text>
</comment>
<comment type="induction">
    <text evidence="2 3 6 7 9">Transcriptionally activated by EspR (PubMed:18685700, PubMed:22389481, PubMed:25536998). Repressed by the MprB/MprA two-component system, by direct regulation and via EspR (PubMed:23104803, PubMed:25536998). Up-regulated by the PhoP/PhoR two-component system, via EspR (PubMed:16573683, PubMed:25536998).</text>
</comment>
<comment type="domain">
    <text evidence="4">The C-terminal region is required for secretion by the ESX-1 system.</text>
</comment>
<comment type="disruption phenotype">
    <text evidence="1 10">Mutant exhibits pathogenesis defects, including reduced virulence in mice, attenuated growth in macrophages and an inability to suppress immunostimulatory cytokines such as IL-12 (PubMed:16135231). Host (human) cells no longer produce cytokine IP-10 (CXCL10) upon infection, but continue to produce IL-1 beta (IL1B) (PubMed:26048138).</text>
</comment>
<comment type="biotechnology">
    <text evidence="5 8">Contains multiple, broadly recognized T-cell epitopes and is a major target of cellular immunity in both active and latent tuberculosis infection, indicating this might be a good vaccine candidate (PubMed:21427227). A fusion protein (p846) of 3 well-defined antigens (EspC, EsxH and Rv2660c) induces robust specific T-cell immune response and could be an effective vaccine (PubMed:24280763).</text>
</comment>
<comment type="similarity">
    <text evidence="12">Belongs to the EspC family.</text>
</comment>
<sequence>MTENLTVQPERLGVLASHHDNAAVDASSGVEAAAGLGESVAITHGPYCSQFNDTLNVYLTAHNALGSSLHTAGVDLAKSLRIAAKIYSEADEAWRKAIDGLFT</sequence>
<name>ESPC_MYCTU</name>
<keyword id="KW-0007">Acetylation</keyword>
<keyword id="KW-1185">Reference proteome</keyword>
<keyword id="KW-0964">Secreted</keyword>
<keyword id="KW-0843">Virulence</keyword>
<accession>P9WJD7</accession>
<accession>L0TD21</accession>
<accession>O06268</accession>
<accession>P65087</accession>
<proteinExistence type="evidence at protein level"/>
<organism>
    <name type="scientific">Mycobacterium tuberculosis (strain ATCC 25618 / H37Rv)</name>
    <dbReference type="NCBI Taxonomy" id="83332"/>
    <lineage>
        <taxon>Bacteria</taxon>
        <taxon>Bacillati</taxon>
        <taxon>Actinomycetota</taxon>
        <taxon>Actinomycetes</taxon>
        <taxon>Mycobacteriales</taxon>
        <taxon>Mycobacteriaceae</taxon>
        <taxon>Mycobacterium</taxon>
        <taxon>Mycobacterium tuberculosis complex</taxon>
    </lineage>
</organism>
<protein>
    <recommendedName>
        <fullName evidence="12">ESX-1 secretion-associated protein EspC</fullName>
    </recommendedName>
</protein>
<dbReference type="EMBL" id="AL123456">
    <property type="protein sequence ID" value="CCP46438.1"/>
    <property type="molecule type" value="Genomic_DNA"/>
</dbReference>
<dbReference type="PIR" id="H70956">
    <property type="entry name" value="H70956"/>
</dbReference>
<dbReference type="RefSeq" id="NP_218132.1">
    <property type="nucleotide sequence ID" value="NC_000962.3"/>
</dbReference>
<dbReference type="RefSeq" id="WP_003899599.1">
    <property type="nucleotide sequence ID" value="NZ_NVQJ01000056.1"/>
</dbReference>
<dbReference type="SMR" id="P9WJD7"/>
<dbReference type="STRING" id="83332.Rv3615c"/>
<dbReference type="iPTMnet" id="P9WJD7"/>
<dbReference type="PaxDb" id="83332-Rv3615c"/>
<dbReference type="DNASU" id="885770"/>
<dbReference type="GeneID" id="45427601"/>
<dbReference type="GeneID" id="885770"/>
<dbReference type="KEGG" id="mtu:Rv3615c"/>
<dbReference type="KEGG" id="mtv:RVBD_3615c"/>
<dbReference type="TubercuList" id="Rv3615c"/>
<dbReference type="eggNOG" id="ENOG5032HXQ">
    <property type="taxonomic scope" value="Bacteria"/>
</dbReference>
<dbReference type="InParanoid" id="P9WJD7"/>
<dbReference type="OrthoDB" id="4734983at2"/>
<dbReference type="PHI-base" id="PHI:9262"/>
<dbReference type="Proteomes" id="UP000001584">
    <property type="component" value="Chromosome"/>
</dbReference>
<dbReference type="GO" id="GO:0005576">
    <property type="term" value="C:extracellular region"/>
    <property type="evidence" value="ECO:0007669"/>
    <property type="project" value="UniProtKB-SubCell"/>
</dbReference>
<dbReference type="GO" id="GO:0009274">
    <property type="term" value="C:peptidoglycan-based cell wall"/>
    <property type="evidence" value="ECO:0007005"/>
    <property type="project" value="MTBBASE"/>
</dbReference>
<dbReference type="GO" id="GO:0051701">
    <property type="term" value="P:biological process involved in interaction with host"/>
    <property type="evidence" value="ECO:0000315"/>
    <property type="project" value="MTBBASE"/>
</dbReference>
<dbReference type="GO" id="GO:0044315">
    <property type="term" value="P:protein secretion by the type VII secretion system"/>
    <property type="evidence" value="ECO:0000315"/>
    <property type="project" value="MTBBASE"/>
</dbReference>
<dbReference type="GO" id="GO:0042783">
    <property type="term" value="P:symbiont-mediated evasion of host immune response"/>
    <property type="evidence" value="ECO:0000315"/>
    <property type="project" value="MTBBASE"/>
</dbReference>
<dbReference type="InterPro" id="IPR022536">
    <property type="entry name" value="EspC"/>
</dbReference>
<dbReference type="Pfam" id="PF10824">
    <property type="entry name" value="T7SS_ESX_EspC"/>
    <property type="match status" value="1"/>
</dbReference>
<feature type="initiator methionine" description="Removed" evidence="13">
    <location>
        <position position="1"/>
    </location>
</feature>
<feature type="chain" id="PRO_0000104138" description="ESX-1 secretion-associated protein EspC">
    <location>
        <begin position="2"/>
        <end position="103"/>
    </location>
</feature>
<feature type="modified residue" description="N-acetylthreonine" evidence="13">
    <location>
        <position position="2"/>
    </location>
</feature>
<evidence type="ECO:0000269" key="1">
    <source>
    </source>
</evidence>
<evidence type="ECO:0000269" key="2">
    <source>
    </source>
</evidence>
<evidence type="ECO:0000269" key="3">
    <source>
    </source>
</evidence>
<evidence type="ECO:0000269" key="4">
    <source>
    </source>
</evidence>
<evidence type="ECO:0000269" key="5">
    <source>
    </source>
</evidence>
<evidence type="ECO:0000269" key="6">
    <source>
    </source>
</evidence>
<evidence type="ECO:0000269" key="7">
    <source>
    </source>
</evidence>
<evidence type="ECO:0000269" key="8">
    <source>
    </source>
</evidence>
<evidence type="ECO:0000269" key="9">
    <source>
    </source>
</evidence>
<evidence type="ECO:0000269" key="10">
    <source>
    </source>
</evidence>
<evidence type="ECO:0000303" key="11">
    <source>
    </source>
</evidence>
<evidence type="ECO:0000305" key="12"/>
<evidence type="ECO:0007744" key="13">
    <source>
    </source>
</evidence>